<evidence type="ECO:0000255" key="1">
    <source>
        <dbReference type="HAMAP-Rule" id="MF_00432"/>
    </source>
</evidence>
<organism>
    <name type="scientific">Phaeodactylum tricornutum (strain CCAP 1055/1)</name>
    <dbReference type="NCBI Taxonomy" id="556484"/>
    <lineage>
        <taxon>Eukaryota</taxon>
        <taxon>Sar</taxon>
        <taxon>Stramenopiles</taxon>
        <taxon>Ochrophyta</taxon>
        <taxon>Bacillariophyta</taxon>
        <taxon>Bacillariophyceae</taxon>
        <taxon>Bacillariophycidae</taxon>
        <taxon>Naviculales</taxon>
        <taxon>Phaeodactylaceae</taxon>
        <taxon>Phaeodactylum</taxon>
    </lineage>
</organism>
<accession>A0T0A0</accession>
<geneLocation type="chloroplast"/>
<feature type="chain" id="PRO_0000275516" description="Cytochrome b6-f complex subunit 5">
    <location>
        <begin position="1"/>
        <end position="37"/>
    </location>
</feature>
<feature type="transmembrane region" description="Helical" evidence="1">
    <location>
        <begin position="5"/>
        <end position="25"/>
    </location>
</feature>
<comment type="function">
    <text evidence="1">Component of the cytochrome b6-f complex, which mediates electron transfer between photosystem II (PSII) and photosystem I (PSI), cyclic electron flow around PSI, and state transitions. PetG is required for either the stability or assembly of the cytochrome b6-f complex.</text>
</comment>
<comment type="subunit">
    <text evidence="1">The 4 large subunits of the cytochrome b6-f complex are cytochrome b6, subunit IV (17 kDa polypeptide, PetD), cytochrome f and the Rieske protein, while the 4 small subunits are PetG, PetL, PetM and PetN. The complex functions as a dimer.</text>
</comment>
<comment type="subcellular location">
    <subcellularLocation>
        <location evidence="1">Plastid</location>
        <location evidence="1">Chloroplast thylakoid membrane</location>
        <topology evidence="1">Single-pass membrane protein</topology>
    </subcellularLocation>
</comment>
<comment type="similarity">
    <text evidence="1">Belongs to the PetG family.</text>
</comment>
<gene>
    <name evidence="1" type="primary">petG</name>
</gene>
<proteinExistence type="inferred from homology"/>
<keyword id="KW-0150">Chloroplast</keyword>
<keyword id="KW-0249">Electron transport</keyword>
<keyword id="KW-0472">Membrane</keyword>
<keyword id="KW-0602">Photosynthesis</keyword>
<keyword id="KW-0934">Plastid</keyword>
<keyword id="KW-1185">Reference proteome</keyword>
<keyword id="KW-0793">Thylakoid</keyword>
<keyword id="KW-0812">Transmembrane</keyword>
<keyword id="KW-1133">Transmembrane helix</keyword>
<keyword id="KW-0813">Transport</keyword>
<name>PETG_PHATC</name>
<protein>
    <recommendedName>
        <fullName evidence="1">Cytochrome b6-f complex subunit 5</fullName>
    </recommendedName>
    <alternativeName>
        <fullName evidence="1">Cytochrome b6-f complex subunit PetG</fullName>
    </alternativeName>
    <alternativeName>
        <fullName evidence="1">Cytochrome b6-f complex subunit V</fullName>
    </alternativeName>
</protein>
<reference key="1">
    <citation type="journal article" date="2007" name="Mol. Genet. Genomics">
        <title>Chloroplast genomes of the diatoms Phaeodactylum tricornutum and Thalassiosira pseudonana: comparison with other plastid genomes of the red lineage.</title>
        <authorList>
            <person name="Oudot-Le Secq M.-P."/>
            <person name="Grimwood J."/>
            <person name="Shapiro H."/>
            <person name="Armbrust E.V."/>
            <person name="Bowler C."/>
            <person name="Green B.R."/>
        </authorList>
    </citation>
    <scope>NUCLEOTIDE SEQUENCE [LARGE SCALE GENOMIC DNA]</scope>
    <source>
        <strain>CCAP 1055/1</strain>
    </source>
</reference>
<sequence>MVEPLLSGIVLGLITVSALGLFVAAFLQYRRGNQFEI</sequence>
<dbReference type="EMBL" id="EF067920">
    <property type="protein sequence ID" value="ABK20603.1"/>
    <property type="molecule type" value="Genomic_DNA"/>
</dbReference>
<dbReference type="RefSeq" id="YP_874380.1">
    <property type="nucleotide sequence ID" value="NC_008588.1"/>
</dbReference>
<dbReference type="SMR" id="A0T0A0"/>
<dbReference type="STRING" id="556484.A0T0A0"/>
<dbReference type="GeneID" id="4524623"/>
<dbReference type="InParanoid" id="A0T0A0"/>
<dbReference type="Proteomes" id="UP000000759">
    <property type="component" value="Chloroplast"/>
</dbReference>
<dbReference type="GO" id="GO:0009535">
    <property type="term" value="C:chloroplast thylakoid membrane"/>
    <property type="evidence" value="ECO:0007669"/>
    <property type="project" value="UniProtKB-SubCell"/>
</dbReference>
<dbReference type="GO" id="GO:0009512">
    <property type="term" value="C:cytochrome b6f complex"/>
    <property type="evidence" value="ECO:0007669"/>
    <property type="project" value="InterPro"/>
</dbReference>
<dbReference type="GO" id="GO:0045158">
    <property type="term" value="F:electron transporter, transferring electrons within cytochrome b6/f complex of photosystem II activity"/>
    <property type="evidence" value="ECO:0007669"/>
    <property type="project" value="UniProtKB-UniRule"/>
</dbReference>
<dbReference type="GO" id="GO:0017004">
    <property type="term" value="P:cytochrome complex assembly"/>
    <property type="evidence" value="ECO:0007669"/>
    <property type="project" value="UniProtKB-UniRule"/>
</dbReference>
<dbReference type="GO" id="GO:0015979">
    <property type="term" value="P:photosynthesis"/>
    <property type="evidence" value="ECO:0007669"/>
    <property type="project" value="UniProtKB-KW"/>
</dbReference>
<dbReference type="HAMAP" id="MF_00432">
    <property type="entry name" value="Cytb6_f_PetG"/>
    <property type="match status" value="1"/>
</dbReference>
<dbReference type="InterPro" id="IPR003683">
    <property type="entry name" value="Cyt_6/f_cplx_su5"/>
</dbReference>
<dbReference type="InterPro" id="IPR036099">
    <property type="entry name" value="Cyt_6/f_cplx_su5_sf"/>
</dbReference>
<dbReference type="NCBIfam" id="NF001907">
    <property type="entry name" value="PRK00665.1"/>
    <property type="match status" value="1"/>
</dbReference>
<dbReference type="Pfam" id="PF02529">
    <property type="entry name" value="PetG"/>
    <property type="match status" value="1"/>
</dbReference>
<dbReference type="PIRSF" id="PIRSF000034">
    <property type="entry name" value="Cyt_b6-f_V"/>
    <property type="match status" value="1"/>
</dbReference>
<dbReference type="SUPFAM" id="SSF103446">
    <property type="entry name" value="PetG subunit of the cytochrome b6f complex"/>
    <property type="match status" value="1"/>
</dbReference>